<feature type="chain" id="PRO_1000057318" description="UDP-N-acetylmuramate--L-alanine ligase">
    <location>
        <begin position="1"/>
        <end position="485"/>
    </location>
</feature>
<feature type="binding site" evidence="1">
    <location>
        <begin position="120"/>
        <end position="126"/>
    </location>
    <ligand>
        <name>ATP</name>
        <dbReference type="ChEBI" id="CHEBI:30616"/>
    </ligand>
</feature>
<reference key="1">
    <citation type="journal article" date="2007" name="Genome Res.">
        <title>Lateral gene transfer between obligate intracellular bacteria: evidence from the Rickettsia massiliae genome.</title>
        <authorList>
            <person name="Blanc G."/>
            <person name="Ogata H."/>
            <person name="Robert C."/>
            <person name="Audic S."/>
            <person name="Claverie J.-M."/>
            <person name="Raoult D."/>
        </authorList>
    </citation>
    <scope>NUCLEOTIDE SEQUENCE [LARGE SCALE GENOMIC DNA]</scope>
    <source>
        <strain>Mtu5</strain>
    </source>
</reference>
<dbReference type="EC" id="6.3.2.8" evidence="1"/>
<dbReference type="EMBL" id="CP000683">
    <property type="protein sequence ID" value="ABV84594.1"/>
    <property type="molecule type" value="Genomic_DNA"/>
</dbReference>
<dbReference type="RefSeq" id="WP_012152571.1">
    <property type="nucleotide sequence ID" value="NC_009900.1"/>
</dbReference>
<dbReference type="SMR" id="A8F108"/>
<dbReference type="KEGG" id="rms:RMA_0339"/>
<dbReference type="HOGENOM" id="CLU_028104_2_2_5"/>
<dbReference type="UniPathway" id="UPA00219"/>
<dbReference type="Proteomes" id="UP000001311">
    <property type="component" value="Chromosome"/>
</dbReference>
<dbReference type="GO" id="GO:0005737">
    <property type="term" value="C:cytoplasm"/>
    <property type="evidence" value="ECO:0007669"/>
    <property type="project" value="UniProtKB-SubCell"/>
</dbReference>
<dbReference type="GO" id="GO:0005524">
    <property type="term" value="F:ATP binding"/>
    <property type="evidence" value="ECO:0007669"/>
    <property type="project" value="UniProtKB-UniRule"/>
</dbReference>
<dbReference type="GO" id="GO:0008763">
    <property type="term" value="F:UDP-N-acetylmuramate-L-alanine ligase activity"/>
    <property type="evidence" value="ECO:0007669"/>
    <property type="project" value="UniProtKB-UniRule"/>
</dbReference>
<dbReference type="GO" id="GO:0051301">
    <property type="term" value="P:cell division"/>
    <property type="evidence" value="ECO:0007669"/>
    <property type="project" value="UniProtKB-KW"/>
</dbReference>
<dbReference type="GO" id="GO:0071555">
    <property type="term" value="P:cell wall organization"/>
    <property type="evidence" value="ECO:0007669"/>
    <property type="project" value="UniProtKB-KW"/>
</dbReference>
<dbReference type="GO" id="GO:0009252">
    <property type="term" value="P:peptidoglycan biosynthetic process"/>
    <property type="evidence" value="ECO:0007669"/>
    <property type="project" value="UniProtKB-UniRule"/>
</dbReference>
<dbReference type="GO" id="GO:0008360">
    <property type="term" value="P:regulation of cell shape"/>
    <property type="evidence" value="ECO:0007669"/>
    <property type="project" value="UniProtKB-KW"/>
</dbReference>
<dbReference type="Gene3D" id="3.90.190.20">
    <property type="entry name" value="Mur ligase, C-terminal domain"/>
    <property type="match status" value="1"/>
</dbReference>
<dbReference type="Gene3D" id="3.40.1190.10">
    <property type="entry name" value="Mur-like, catalytic domain"/>
    <property type="match status" value="1"/>
</dbReference>
<dbReference type="Gene3D" id="3.40.50.720">
    <property type="entry name" value="NAD(P)-binding Rossmann-like Domain"/>
    <property type="match status" value="1"/>
</dbReference>
<dbReference type="HAMAP" id="MF_00046">
    <property type="entry name" value="MurC"/>
    <property type="match status" value="1"/>
</dbReference>
<dbReference type="InterPro" id="IPR036565">
    <property type="entry name" value="Mur-like_cat_sf"/>
</dbReference>
<dbReference type="InterPro" id="IPR004101">
    <property type="entry name" value="Mur_ligase_C"/>
</dbReference>
<dbReference type="InterPro" id="IPR036615">
    <property type="entry name" value="Mur_ligase_C_dom_sf"/>
</dbReference>
<dbReference type="InterPro" id="IPR013221">
    <property type="entry name" value="Mur_ligase_cen"/>
</dbReference>
<dbReference type="InterPro" id="IPR000713">
    <property type="entry name" value="Mur_ligase_N"/>
</dbReference>
<dbReference type="InterPro" id="IPR050061">
    <property type="entry name" value="MurCDEF_pg_biosynth"/>
</dbReference>
<dbReference type="InterPro" id="IPR005758">
    <property type="entry name" value="UDP-N-AcMur_Ala_ligase_MurC"/>
</dbReference>
<dbReference type="NCBIfam" id="TIGR01082">
    <property type="entry name" value="murC"/>
    <property type="match status" value="1"/>
</dbReference>
<dbReference type="PANTHER" id="PTHR43445:SF3">
    <property type="entry name" value="UDP-N-ACETYLMURAMATE--L-ALANINE LIGASE"/>
    <property type="match status" value="1"/>
</dbReference>
<dbReference type="PANTHER" id="PTHR43445">
    <property type="entry name" value="UDP-N-ACETYLMURAMATE--L-ALANINE LIGASE-RELATED"/>
    <property type="match status" value="1"/>
</dbReference>
<dbReference type="Pfam" id="PF01225">
    <property type="entry name" value="Mur_ligase"/>
    <property type="match status" value="1"/>
</dbReference>
<dbReference type="Pfam" id="PF02875">
    <property type="entry name" value="Mur_ligase_C"/>
    <property type="match status" value="1"/>
</dbReference>
<dbReference type="Pfam" id="PF08245">
    <property type="entry name" value="Mur_ligase_M"/>
    <property type="match status" value="1"/>
</dbReference>
<dbReference type="SUPFAM" id="SSF51984">
    <property type="entry name" value="MurCD N-terminal domain"/>
    <property type="match status" value="1"/>
</dbReference>
<dbReference type="SUPFAM" id="SSF53623">
    <property type="entry name" value="MurD-like peptide ligases, catalytic domain"/>
    <property type="match status" value="1"/>
</dbReference>
<dbReference type="SUPFAM" id="SSF53244">
    <property type="entry name" value="MurD-like peptide ligases, peptide-binding domain"/>
    <property type="match status" value="1"/>
</dbReference>
<keyword id="KW-0067">ATP-binding</keyword>
<keyword id="KW-0131">Cell cycle</keyword>
<keyword id="KW-0132">Cell division</keyword>
<keyword id="KW-0133">Cell shape</keyword>
<keyword id="KW-0961">Cell wall biogenesis/degradation</keyword>
<keyword id="KW-0963">Cytoplasm</keyword>
<keyword id="KW-0436">Ligase</keyword>
<keyword id="KW-0547">Nucleotide-binding</keyword>
<keyword id="KW-0573">Peptidoglycan synthesis</keyword>
<sequence length="485" mass="53322">MLLLELKKTNQTLETIHFIGIGGVGMSGIAEILHNLGYKVQGSDLVENYNTKRLESYGIKIFLGHAEQNITNVSYVVISSAINPKNPEIKEALERKIPIIRRADMLAELMRLKCSVAVSGSHGKTTTTSLVACLFEAAGLCPTVINGGIINNKSTNAYLGSSNYLIAEADESDATFIHIPSTIAIITNIDPEHLDYYKDFETLIGAFRSFITNLPFYGFAVCCTDHKIVRKLVDDITERKIVTYGIDSEDAHIIAFNINTDIASSTFDVKISLPNVLGTTIIEKITIPTPGRHNILNSLAAIAVGIELDFGIKAIKNGFNNFKGVKRRFTKVAEYNKASIIDDYAHHPEEIKATLATAKNIANKQNGKVIAIFQPHRYSRMQYLFDDFMLCFADADILYITDIYAAGENPIEGITGQSLVDKITKHKHHDKANFLAELDDAVGVIIDNAASGDMIIMMGAGNISSFANELDRRLLSRGFSCHTVV</sequence>
<evidence type="ECO:0000255" key="1">
    <source>
        <dbReference type="HAMAP-Rule" id="MF_00046"/>
    </source>
</evidence>
<protein>
    <recommendedName>
        <fullName evidence="1">UDP-N-acetylmuramate--L-alanine ligase</fullName>
        <ecNumber evidence="1">6.3.2.8</ecNumber>
    </recommendedName>
    <alternativeName>
        <fullName evidence="1">UDP-N-acetylmuramoyl-L-alanine synthetase</fullName>
    </alternativeName>
</protein>
<organism>
    <name type="scientific">Rickettsia massiliae (strain Mtu5)</name>
    <dbReference type="NCBI Taxonomy" id="416276"/>
    <lineage>
        <taxon>Bacteria</taxon>
        <taxon>Pseudomonadati</taxon>
        <taxon>Pseudomonadota</taxon>
        <taxon>Alphaproteobacteria</taxon>
        <taxon>Rickettsiales</taxon>
        <taxon>Rickettsiaceae</taxon>
        <taxon>Rickettsieae</taxon>
        <taxon>Rickettsia</taxon>
        <taxon>spotted fever group</taxon>
    </lineage>
</organism>
<comment type="function">
    <text evidence="1">Cell wall formation.</text>
</comment>
<comment type="catalytic activity">
    <reaction evidence="1">
        <text>UDP-N-acetyl-alpha-D-muramate + L-alanine + ATP = UDP-N-acetyl-alpha-D-muramoyl-L-alanine + ADP + phosphate + H(+)</text>
        <dbReference type="Rhea" id="RHEA:23372"/>
        <dbReference type="ChEBI" id="CHEBI:15378"/>
        <dbReference type="ChEBI" id="CHEBI:30616"/>
        <dbReference type="ChEBI" id="CHEBI:43474"/>
        <dbReference type="ChEBI" id="CHEBI:57972"/>
        <dbReference type="ChEBI" id="CHEBI:70757"/>
        <dbReference type="ChEBI" id="CHEBI:83898"/>
        <dbReference type="ChEBI" id="CHEBI:456216"/>
        <dbReference type="EC" id="6.3.2.8"/>
    </reaction>
</comment>
<comment type="pathway">
    <text evidence="1">Cell wall biogenesis; peptidoglycan biosynthesis.</text>
</comment>
<comment type="subcellular location">
    <subcellularLocation>
        <location evidence="1">Cytoplasm</location>
    </subcellularLocation>
</comment>
<comment type="similarity">
    <text evidence="1">Belongs to the MurCDEF family.</text>
</comment>
<name>MURC_RICM5</name>
<gene>
    <name evidence="1" type="primary">murC</name>
    <name type="ordered locus">RMA_0339</name>
</gene>
<proteinExistence type="inferred from homology"/>
<accession>A8F108</accession>